<keyword id="KW-0472">Membrane</keyword>
<keyword id="KW-0496">Mitochondrion</keyword>
<keyword id="KW-0999">Mitochondrion inner membrane</keyword>
<keyword id="KW-1185">Reference proteome</keyword>
<keyword id="KW-0809">Transit peptide</keyword>
<gene>
    <name type="primary">coq10b</name>
</gene>
<organism>
    <name type="scientific">Xenopus laevis</name>
    <name type="common">African clawed frog</name>
    <dbReference type="NCBI Taxonomy" id="8355"/>
    <lineage>
        <taxon>Eukaryota</taxon>
        <taxon>Metazoa</taxon>
        <taxon>Chordata</taxon>
        <taxon>Craniata</taxon>
        <taxon>Vertebrata</taxon>
        <taxon>Euteleostomi</taxon>
        <taxon>Amphibia</taxon>
        <taxon>Batrachia</taxon>
        <taxon>Anura</taxon>
        <taxon>Pipoidea</taxon>
        <taxon>Pipidae</taxon>
        <taxon>Xenopodinae</taxon>
        <taxon>Xenopus</taxon>
        <taxon>Xenopus</taxon>
    </lineage>
</organism>
<reference key="1">
    <citation type="submission" date="2004-06" db="EMBL/GenBank/DDBJ databases">
        <authorList>
            <consortium name="NIH - Xenopus Gene Collection (XGC) project"/>
        </authorList>
    </citation>
    <scope>NUCLEOTIDE SEQUENCE [LARGE SCALE MRNA]</scope>
    <source>
        <tissue>Embryo</tissue>
    </source>
</reference>
<feature type="transit peptide" description="Mitochondrion" evidence="2">
    <location>
        <begin position="1"/>
        <end status="unknown"/>
    </location>
</feature>
<feature type="chain" id="PRO_0000228652" description="Coenzyme Q-binding protein COQ10 homolog B, mitochondrial">
    <location>
        <begin status="unknown"/>
        <end position="244"/>
    </location>
</feature>
<name>CQ10B_XENLA</name>
<sequence length="244" mass="27215">MAATCCWGRSGLSSLTRALLEAEKRQCRALVRTGKKPQGIRYLSSCGILASRCPKLPRPASPAHIQGRTFLNLAAPLLGSKRIEYSESKVLGFSIEQMYDIVADVQNYKIFVPWCNRSKVLSCKKGVTRAELEVGFPPVVERYVSEISVIPLHQVRAVCCDGKLFNHLETVWRFSPGLSGRPDTCTLDFCVSFEFKSLLHSHLASVFFDEVVKQMVCAFEKQAGRIYGRQEVPLAAAAKLRAMR</sequence>
<dbReference type="EMBL" id="BC073464">
    <property type="protein sequence ID" value="AAH73464.1"/>
    <property type="molecule type" value="mRNA"/>
</dbReference>
<dbReference type="RefSeq" id="NP_001085878.1">
    <property type="nucleotide sequence ID" value="NM_001092409.1"/>
</dbReference>
<dbReference type="SMR" id="Q6GNP0"/>
<dbReference type="DNASU" id="444305"/>
<dbReference type="GeneID" id="444305"/>
<dbReference type="KEGG" id="xla:444305"/>
<dbReference type="AGR" id="Xenbase:XB-GENE-6078949"/>
<dbReference type="CTD" id="444305"/>
<dbReference type="Xenbase" id="XB-GENE-6078949">
    <property type="gene designation" value="coq10b.L"/>
</dbReference>
<dbReference type="OrthoDB" id="292693at2759"/>
<dbReference type="Proteomes" id="UP000186698">
    <property type="component" value="Chromosome 9_10L"/>
</dbReference>
<dbReference type="Bgee" id="444305">
    <property type="expression patterns" value="Expressed in kidney and 19 other cell types or tissues"/>
</dbReference>
<dbReference type="GO" id="GO:0005743">
    <property type="term" value="C:mitochondrial inner membrane"/>
    <property type="evidence" value="ECO:0007669"/>
    <property type="project" value="UniProtKB-SubCell"/>
</dbReference>
<dbReference type="GO" id="GO:0005739">
    <property type="term" value="C:mitochondrion"/>
    <property type="evidence" value="ECO:0000318"/>
    <property type="project" value="GO_Central"/>
</dbReference>
<dbReference type="GO" id="GO:0048039">
    <property type="term" value="F:ubiquinone binding"/>
    <property type="evidence" value="ECO:0007669"/>
    <property type="project" value="InterPro"/>
</dbReference>
<dbReference type="GO" id="GO:0045333">
    <property type="term" value="P:cellular respiration"/>
    <property type="evidence" value="ECO:0007669"/>
    <property type="project" value="InterPro"/>
</dbReference>
<dbReference type="CDD" id="cd07813">
    <property type="entry name" value="COQ10p_like"/>
    <property type="match status" value="1"/>
</dbReference>
<dbReference type="FunFam" id="3.30.530.20:FF:000002">
    <property type="entry name" value="Coenzyme Q-binding protein COQ10 homolog, mitochondrial"/>
    <property type="match status" value="1"/>
</dbReference>
<dbReference type="Gene3D" id="3.30.530.20">
    <property type="match status" value="1"/>
</dbReference>
<dbReference type="InterPro" id="IPR044996">
    <property type="entry name" value="COQ10-like"/>
</dbReference>
<dbReference type="InterPro" id="IPR005031">
    <property type="entry name" value="COQ10_START"/>
</dbReference>
<dbReference type="InterPro" id="IPR023393">
    <property type="entry name" value="START-like_dom_sf"/>
</dbReference>
<dbReference type="PANTHER" id="PTHR12901:SF14">
    <property type="entry name" value="COENZYME Q-BINDING PROTEIN COQ10 HOMOLOG, MITOCHONDRIAL"/>
    <property type="match status" value="1"/>
</dbReference>
<dbReference type="PANTHER" id="PTHR12901">
    <property type="entry name" value="SPERM PROTEIN HOMOLOG"/>
    <property type="match status" value="1"/>
</dbReference>
<dbReference type="Pfam" id="PF03364">
    <property type="entry name" value="Polyketide_cyc"/>
    <property type="match status" value="1"/>
</dbReference>
<dbReference type="SUPFAM" id="SSF55961">
    <property type="entry name" value="Bet v1-like"/>
    <property type="match status" value="1"/>
</dbReference>
<comment type="function">
    <text evidence="1">Required for the function of coenzyme Q in the respiratory chain. May serve as a chaperone or may be involved in the transport of Q6 from its site of synthesis to the catalytic sites of the respiratory complexes (By similarity).</text>
</comment>
<comment type="subunit">
    <text evidence="1">Interacts with coenzyme Q.</text>
</comment>
<comment type="subcellular location">
    <subcellularLocation>
        <location evidence="1">Mitochondrion inner membrane</location>
        <topology evidence="1">Peripheral membrane protein</topology>
        <orientation evidence="1">Matrix side</orientation>
    </subcellularLocation>
</comment>
<comment type="similarity">
    <text evidence="3">Belongs to the COQ10 family.</text>
</comment>
<proteinExistence type="evidence at transcript level"/>
<protein>
    <recommendedName>
        <fullName>Coenzyme Q-binding protein COQ10 homolog B, mitochondrial</fullName>
    </recommendedName>
</protein>
<accession>Q6GNP0</accession>
<evidence type="ECO:0000250" key="1"/>
<evidence type="ECO:0000255" key="2"/>
<evidence type="ECO:0000305" key="3"/>